<accession>C7GQY3</accession>
<reference key="1">
    <citation type="journal article" date="2009" name="Genome Res.">
        <title>Genome structure of a Saccharomyces cerevisiae strain widely used in bioethanol production.</title>
        <authorList>
            <person name="Argueso J.L."/>
            <person name="Carazzolle M.F."/>
            <person name="Mieczkowski P.A."/>
            <person name="Duarte F.M."/>
            <person name="Netto O.V.C."/>
            <person name="Missawa S.K."/>
            <person name="Galzerani F."/>
            <person name="Costa G.G.L."/>
            <person name="Vidal R.O."/>
            <person name="Noronha M.F."/>
            <person name="Dominska M."/>
            <person name="Andrietta M.G.S."/>
            <person name="Andrietta S.R."/>
            <person name="Cunha A.F."/>
            <person name="Gomes L.H."/>
            <person name="Tavares F.C.A."/>
            <person name="Alcarde A.R."/>
            <person name="Dietrich F.S."/>
            <person name="McCusker J.H."/>
            <person name="Petes T.D."/>
            <person name="Pereira G.A.G."/>
        </authorList>
    </citation>
    <scope>NUCLEOTIDE SEQUENCE [LARGE SCALE GENOMIC DNA]</scope>
    <source>
        <strain>JAY291</strain>
    </source>
</reference>
<keyword id="KW-0010">Activator</keyword>
<keyword id="KW-0175">Coiled coil</keyword>
<keyword id="KW-0238">DNA-binding</keyword>
<keyword id="KW-0349">Heme</keyword>
<keyword id="KW-0408">Iron</keyword>
<keyword id="KW-0479">Metal-binding</keyword>
<keyword id="KW-0539">Nucleus</keyword>
<keyword id="KW-0677">Repeat</keyword>
<keyword id="KW-0804">Transcription</keyword>
<keyword id="KW-0805">Transcription regulation</keyword>
<keyword id="KW-0862">Zinc</keyword>
<feature type="chain" id="PRO_0000392060" description="Heme-responsive zinc finger transcription factor HAP1">
    <location>
        <begin position="1"/>
        <end position="1483"/>
    </location>
</feature>
<feature type="repeat" description="HRM 1">
    <location>
        <begin position="280"/>
        <end position="285"/>
    </location>
</feature>
<feature type="repeat" description="HRM 2">
    <location>
        <begin position="299"/>
        <end position="304"/>
    </location>
</feature>
<feature type="repeat" description="HRM 3">
    <location>
        <begin position="323"/>
        <end position="328"/>
    </location>
</feature>
<feature type="repeat" description="HRM 4">
    <location>
        <begin position="347"/>
        <end position="352"/>
    </location>
</feature>
<feature type="repeat" description="HRM 5">
    <location>
        <begin position="389"/>
        <end position="394"/>
    </location>
</feature>
<feature type="repeat" description="HRM 6">
    <location>
        <begin position="415"/>
        <end position="420"/>
    </location>
</feature>
<feature type="repeat" description="HRM 7">
    <location>
        <begin position="1192"/>
        <end position="1197"/>
    </location>
</feature>
<feature type="DNA-binding region" description="Zn(2)-C6 fungal-type" evidence="3">
    <location>
        <begin position="64"/>
        <end position="93"/>
    </location>
</feature>
<feature type="region of interest" description="Disordered" evidence="4">
    <location>
        <begin position="1"/>
        <end position="56"/>
    </location>
</feature>
<feature type="region of interest" description="Disordered" evidence="4">
    <location>
        <begin position="162"/>
        <end position="208"/>
    </location>
</feature>
<feature type="region of interest" description="Heme-responsive; required for HMC formation" evidence="1">
    <location>
        <begin position="244"/>
        <end position="444"/>
    </location>
</feature>
<feature type="region of interest" description="Disordered" evidence="4">
    <location>
        <begin position="432"/>
        <end position="458"/>
    </location>
</feature>
<feature type="region of interest" description="Disordered" evidence="4">
    <location>
        <begin position="706"/>
        <end position="767"/>
    </location>
</feature>
<feature type="region of interest" description="Disordered" evidence="4">
    <location>
        <begin position="1266"/>
        <end position="1289"/>
    </location>
</feature>
<feature type="region of interest" description="Disordered" evidence="4">
    <location>
        <begin position="1386"/>
        <end position="1411"/>
    </location>
</feature>
<feature type="coiled-coil region" evidence="2">
    <location>
        <begin position="105"/>
        <end position="134"/>
    </location>
</feature>
<feature type="compositionally biased region" description="Polar residues" evidence="4">
    <location>
        <begin position="1"/>
        <end position="50"/>
    </location>
</feature>
<feature type="compositionally biased region" description="Polar residues" evidence="4">
    <location>
        <begin position="162"/>
        <end position="176"/>
    </location>
</feature>
<feature type="compositionally biased region" description="Low complexity" evidence="4">
    <location>
        <begin position="177"/>
        <end position="208"/>
    </location>
</feature>
<feature type="compositionally biased region" description="Polar residues" evidence="4">
    <location>
        <begin position="432"/>
        <end position="447"/>
    </location>
</feature>
<feature type="compositionally biased region" description="Polar residues" evidence="4">
    <location>
        <begin position="706"/>
        <end position="734"/>
    </location>
</feature>
<feature type="compositionally biased region" description="Low complexity" evidence="4">
    <location>
        <begin position="735"/>
        <end position="759"/>
    </location>
</feature>
<feature type="compositionally biased region" description="Polar residues" evidence="4">
    <location>
        <begin position="1388"/>
        <end position="1411"/>
    </location>
</feature>
<feature type="binding site" evidence="1">
    <location>
        <position position="64"/>
    </location>
    <ligand>
        <name>Zn(2+)</name>
        <dbReference type="ChEBI" id="CHEBI:29105"/>
        <label>1</label>
    </ligand>
</feature>
<feature type="binding site" evidence="1">
    <location>
        <position position="64"/>
    </location>
    <ligand>
        <name>Zn(2+)</name>
        <dbReference type="ChEBI" id="CHEBI:29105"/>
        <label>2</label>
    </ligand>
</feature>
<feature type="binding site" evidence="1">
    <location>
        <position position="67"/>
    </location>
    <ligand>
        <name>Zn(2+)</name>
        <dbReference type="ChEBI" id="CHEBI:29105"/>
        <label>1</label>
    </ligand>
</feature>
<feature type="binding site" evidence="1">
    <location>
        <position position="74"/>
    </location>
    <ligand>
        <name>Zn(2+)</name>
        <dbReference type="ChEBI" id="CHEBI:29105"/>
        <label>1</label>
    </ligand>
</feature>
<feature type="binding site" evidence="1">
    <location>
        <position position="81"/>
    </location>
    <ligand>
        <name>Zn(2+)</name>
        <dbReference type="ChEBI" id="CHEBI:29105"/>
        <label>1</label>
    </ligand>
</feature>
<feature type="binding site" evidence="1">
    <location>
        <position position="81"/>
    </location>
    <ligand>
        <name>Zn(2+)</name>
        <dbReference type="ChEBI" id="CHEBI:29105"/>
        <label>2</label>
    </ligand>
</feature>
<feature type="binding site" evidence="1">
    <location>
        <position position="84"/>
    </location>
    <ligand>
        <name>Zn(2+)</name>
        <dbReference type="ChEBI" id="CHEBI:29105"/>
        <label>2</label>
    </ligand>
</feature>
<feature type="binding site" evidence="1">
    <location>
        <position position="93"/>
    </location>
    <ligand>
        <name>Zn(2+)</name>
        <dbReference type="ChEBI" id="CHEBI:29105"/>
        <label>2</label>
    </ligand>
</feature>
<sequence>MSNTPYNSSVPSIASMTQSSVSRSPNMHTATTPGANTSSNSPPLHMSSDSSKIKRKRNRIPLSCTICRKRKVKCDKLRPHCQQCTKTGVAHLCHYMEQTWAEEAEKELLKDNELKKLRERVKSLEKTLSKVHSSPSSNSLKSYNIPESSNLFMGSDEHTTLVNANTGSASSASHMHQQQQQQQQQEQQQDFSRSANANANSSSLSISNKYDNDELDLTKDFDLLHIKSNGTIHLGATHWLSIMKGDPYLKLLWGHIFAMREKLNEWYYQKNSYSKLKSSKCPINHAQAPPSAAAAATRKCPVDHSAFSSGMVAPKEETPLPRKCPVDHTMFSSGMIPPREDTSSQKRCPVDHTMYSAGMMPPKDETPSPFSTKAMIDHNKHTMNPPQSKCPVDHRNYMKDYPSDMANSSSNPASRCPIDHSSMKNTAALPASTHNTIPHHQPQSGSHARSHPAQNRKHDSYMTESEVLATLCEMLPPKRVIALFIEKFFKHLYPAIPILDEQNFKNHMNQMLSLSSMNPTVNNFGMSMPSSSTLENQPITQINLPKLSDSCNLGILIIILRLTWLSIPSNSCEVDLGEESGSFLVPNESSNMSASALTSMAKEESLLLKHETPVEALELCQKYLIKFDELSSISNNNVNLTTVQFAIFYNFYMKSASNDLTTLTNTNNTGMANPGHDSESHQILLSNITQMAFSCGLHRDPDNFPQLNATIPATSQDVSNNGSKKANPSTNPTLNNNMSAATTNSSSRSGSADSRSGSNPVNKKENQVSIERFKHTWRKIWYYIVSMDVNQSLSLGSPRLLRNLREFSDTKLPSASRIDYVRDIKELIIVKNFTLFFQIDLCIIAVLNHILNVSLARSVRKFELDSLINLLKNLTYGTENVNDVVSSLINKGLLPTSEGGSVDSNNDEIYGLPKLTDILNHGQHNQNLYADGRNTSSSDIDKKLDLPHESTTRALFFSKHMTIRMLLYLLNYILFTHYEPMGSEDPGTNILAKEYAQEALNFAMDGYRNCMIFFNNIRNTNSLFDYMNVILSYPCLDIGHRSLQFIVCLILRAKCGPLTGMRESSIITNGTSSGFNSSVEDEDVKVKQESSDELKKDDFMKDVNLDSGDSLAEILMSRMLLFQKLTKQLSKKYNYAIRMNKSTGFFVSLLNTPSKKPDSKSGGSSFMLGNWKHPKVSNMSGFLAGDKDQLQKCPVYQDALGFVSPTGANEGSAPMQGMSLQGSTARMGGTQLPPIRSYKPITYTSSNLRRMNETGEAEAKRRRFNDGYIDNNSNNDIPRGISPKPSNGLSSVQPLLSSFSMNQLYGGTIPTVPSLTNITSQMGALPSLDRITTNQINLPDPSRDEAFDNSIKQMTPMTSAFMNANTTIPSSTLNGNMNMNGAGTANTDTSANGSALSTLTSPQGSDLASNSATQYKPDLEDFLMQNSNFNGLMINPSSLVEVVGGYNDPNNLGRNDAVDFLPVDNVEIDGLVDFYRADFPIWE</sequence>
<evidence type="ECO:0000250" key="1"/>
<evidence type="ECO:0000255" key="2"/>
<evidence type="ECO:0000255" key="3">
    <source>
        <dbReference type="PROSITE-ProRule" id="PRU00227"/>
    </source>
</evidence>
<evidence type="ECO:0000256" key="4">
    <source>
        <dbReference type="SAM" id="MobiDB-lite"/>
    </source>
</evidence>
<name>HAP1_YEAS2</name>
<proteinExistence type="inferred from homology"/>
<protein>
    <recommendedName>
        <fullName>Heme-responsive zinc finger transcription factor HAP1</fullName>
    </recommendedName>
    <alternativeName>
        <fullName>CYP1 activatory protein</fullName>
    </alternativeName>
    <alternativeName>
        <fullName>Heme activator protein 1</fullName>
    </alternativeName>
</protein>
<comment type="function">
    <text evidence="1">Regulation of oxygen dependent gene expression. It modulates the expression of Iso-1 (CYP1) and Iso-2 (CYP3) cytochrome c. In response to heme, promotes transcription of genes encoding functions required for respiration, controlling oxidative damage and repression of anaerobic genes. Binds to the sequence 5'-CGGNNNTNNCGG-3' (By similarity).</text>
</comment>
<comment type="subunit">
    <text evidence="1">Binds DNA as a homodimer. Interacts with SRO9 and YDJ1. In the absence of heme, binds to at least four cellular proteins, including YDJ1 and SRO9, forming a high-molecular-weight complex (HMC) which results in repression of its activity and dictates its DNA-binding specificity (By similarity).</text>
</comment>
<comment type="subcellular location">
    <subcellularLocation>
        <location evidence="3">Nucleus</location>
    </subcellularLocation>
</comment>
<comment type="miscellaneous">
    <text evidence="1">Heme is an effector molecule for CYP1/HAP1. The repeat region (see FT table) mediates heme induction by masking the DNA-binding domain in the absence of inducer (By similarity).</text>
</comment>
<organism>
    <name type="scientific">Saccharomyces cerevisiae (strain JAY291)</name>
    <name type="common">Baker's yeast</name>
    <dbReference type="NCBI Taxonomy" id="574961"/>
    <lineage>
        <taxon>Eukaryota</taxon>
        <taxon>Fungi</taxon>
        <taxon>Dikarya</taxon>
        <taxon>Ascomycota</taxon>
        <taxon>Saccharomycotina</taxon>
        <taxon>Saccharomycetes</taxon>
        <taxon>Saccharomycetales</taxon>
        <taxon>Saccharomycetaceae</taxon>
        <taxon>Saccharomyces</taxon>
    </lineage>
</organism>
<dbReference type="EMBL" id="ACFL01000136">
    <property type="protein sequence ID" value="EEU06770.1"/>
    <property type="molecule type" value="Genomic_DNA"/>
</dbReference>
<dbReference type="SMR" id="C7GQY3"/>
<dbReference type="OrthoDB" id="40778at4893"/>
<dbReference type="Proteomes" id="UP000008073">
    <property type="component" value="Unassembled WGS sequence"/>
</dbReference>
<dbReference type="GO" id="GO:0005634">
    <property type="term" value="C:nucleus"/>
    <property type="evidence" value="ECO:0007669"/>
    <property type="project" value="UniProtKB-SubCell"/>
</dbReference>
<dbReference type="GO" id="GO:0001228">
    <property type="term" value="F:DNA-binding transcription activator activity, RNA polymerase II-specific"/>
    <property type="evidence" value="ECO:0007669"/>
    <property type="project" value="TreeGrafter"/>
</dbReference>
<dbReference type="GO" id="GO:0000978">
    <property type="term" value="F:RNA polymerase II cis-regulatory region sequence-specific DNA binding"/>
    <property type="evidence" value="ECO:0007669"/>
    <property type="project" value="TreeGrafter"/>
</dbReference>
<dbReference type="GO" id="GO:0008270">
    <property type="term" value="F:zinc ion binding"/>
    <property type="evidence" value="ECO:0007669"/>
    <property type="project" value="InterPro"/>
</dbReference>
<dbReference type="GO" id="GO:0006351">
    <property type="term" value="P:DNA-templated transcription"/>
    <property type="evidence" value="ECO:0007669"/>
    <property type="project" value="InterPro"/>
</dbReference>
<dbReference type="CDD" id="cd12148">
    <property type="entry name" value="fungal_TF_MHR"/>
    <property type="match status" value="1"/>
</dbReference>
<dbReference type="CDD" id="cd00067">
    <property type="entry name" value="GAL4"/>
    <property type="match status" value="1"/>
</dbReference>
<dbReference type="CDD" id="cd14655">
    <property type="entry name" value="ZIP_Hap1"/>
    <property type="match status" value="1"/>
</dbReference>
<dbReference type="FunFam" id="4.10.240.10:FF:000014">
    <property type="entry name" value="HAP1p Zinc finger transcription factor"/>
    <property type="match status" value="1"/>
</dbReference>
<dbReference type="Gene3D" id="1.20.5.170">
    <property type="match status" value="1"/>
</dbReference>
<dbReference type="Gene3D" id="4.10.240.10">
    <property type="entry name" value="Zn(2)-C6 fungal-type DNA-binding domain"/>
    <property type="match status" value="1"/>
</dbReference>
<dbReference type="InterPro" id="IPR046347">
    <property type="entry name" value="bZIP_sf"/>
</dbReference>
<dbReference type="InterPro" id="IPR051430">
    <property type="entry name" value="Fungal_TF_Env_Response"/>
</dbReference>
<dbReference type="InterPro" id="IPR007219">
    <property type="entry name" value="Transcription_factor_dom_fun"/>
</dbReference>
<dbReference type="InterPro" id="IPR036864">
    <property type="entry name" value="Zn2-C6_fun-type_DNA-bd_sf"/>
</dbReference>
<dbReference type="InterPro" id="IPR001138">
    <property type="entry name" value="Zn2Cys6_DnaBD"/>
</dbReference>
<dbReference type="PANTHER" id="PTHR31944">
    <property type="entry name" value="HEME-RESPONSIVE ZINC FINGER TRANSCRIPTION FACTOR HAP1"/>
    <property type="match status" value="1"/>
</dbReference>
<dbReference type="PANTHER" id="PTHR31944:SF131">
    <property type="entry name" value="HEME-RESPONSIVE ZINC FINGER TRANSCRIPTION FACTOR HAP1"/>
    <property type="match status" value="1"/>
</dbReference>
<dbReference type="Pfam" id="PF00172">
    <property type="entry name" value="Zn_clus"/>
    <property type="match status" value="1"/>
</dbReference>
<dbReference type="SMART" id="SM00906">
    <property type="entry name" value="Fungal_trans"/>
    <property type="match status" value="1"/>
</dbReference>
<dbReference type="SMART" id="SM00066">
    <property type="entry name" value="GAL4"/>
    <property type="match status" value="1"/>
</dbReference>
<dbReference type="SUPFAM" id="SSF57959">
    <property type="entry name" value="Leucine zipper domain"/>
    <property type="match status" value="1"/>
</dbReference>
<dbReference type="SUPFAM" id="SSF57701">
    <property type="entry name" value="Zn2/Cys6 DNA-binding domain"/>
    <property type="match status" value="1"/>
</dbReference>
<dbReference type="PROSITE" id="PS00463">
    <property type="entry name" value="ZN2_CY6_FUNGAL_1"/>
    <property type="match status" value="1"/>
</dbReference>
<dbReference type="PROSITE" id="PS50048">
    <property type="entry name" value="ZN2_CY6_FUNGAL_2"/>
    <property type="match status" value="1"/>
</dbReference>
<gene>
    <name type="primary">HAP1</name>
    <name type="synonym">CYP1</name>
    <name type="ORF">C1Q_02735</name>
</gene>